<proteinExistence type="evidence at transcript level"/>
<reference key="1">
    <citation type="journal article" date="2002" name="J. Bacteriol.">
        <title>Whole-genome comparison of Mycobacterium tuberculosis clinical and laboratory strains.</title>
        <authorList>
            <person name="Fleischmann R.D."/>
            <person name="Alland D."/>
            <person name="Eisen J.A."/>
            <person name="Carpenter L."/>
            <person name="White O."/>
            <person name="Peterson J.D."/>
            <person name="DeBoy R.T."/>
            <person name="Dodson R.J."/>
            <person name="Gwinn M.L."/>
            <person name="Haft D.H."/>
            <person name="Hickey E.K."/>
            <person name="Kolonay J.F."/>
            <person name="Nelson W.C."/>
            <person name="Umayam L.A."/>
            <person name="Ermolaeva M.D."/>
            <person name="Salzberg S.L."/>
            <person name="Delcher A."/>
            <person name="Utterback T.R."/>
            <person name="Weidman J.F."/>
            <person name="Khouri H.M."/>
            <person name="Gill J."/>
            <person name="Mikula A."/>
            <person name="Bishai W."/>
            <person name="Jacobs W.R. Jr."/>
            <person name="Venter J.C."/>
            <person name="Fraser C.M."/>
        </authorList>
    </citation>
    <scope>NUCLEOTIDE SEQUENCE [LARGE SCALE GENOMIC DNA]</scope>
    <source>
        <strain>CDC 1551 / Oshkosh</strain>
    </source>
</reference>
<reference key="2">
    <citation type="journal article" date="2003" name="J. Exp. Med.">
        <title>Inhibition of respiration by nitric oxide induces a Mycobacterium tuberculosis dormancy program.</title>
        <authorList>
            <person name="Voskuil M.I."/>
            <person name="Schnappinger D."/>
            <person name="Visconti K.C."/>
            <person name="Harrell M.I."/>
            <person name="Dolganov G.M."/>
            <person name="Sherman D.R."/>
            <person name="Schoolnik G.K."/>
        </authorList>
    </citation>
    <scope>INDUCTION BY NITRIC OXIDE (NO) AND BY HYPOXIA</scope>
    <scope>DORMANCY REGULON</scope>
    <source>
        <strain>CDC 1551 / Oshkosh</strain>
    </source>
</reference>
<keyword id="KW-1185">Reference proteome</keyword>
<name>Y2628_MYCTO</name>
<gene>
    <name type="ordered locus">MT2703</name>
</gene>
<protein>
    <recommendedName>
        <fullName>Putative uncharacterized protein MT2703</fullName>
    </recommendedName>
</protein>
<comment type="induction">
    <text evidence="1">A member of the dormancy regulon. Induced in response to reduced oxygen tension (hypoxia) and low levels of nitric oxide (NO).</text>
</comment>
<feature type="chain" id="PRO_0000427533" description="Putative uncharacterized protein MT2703">
    <location>
        <begin position="1"/>
        <end position="120"/>
    </location>
</feature>
<dbReference type="EMBL" id="AE000516">
    <property type="protein sequence ID" value="AAK47019.1"/>
    <property type="molecule type" value="Genomic_DNA"/>
</dbReference>
<dbReference type="PIR" id="C70573">
    <property type="entry name" value="C70573"/>
</dbReference>
<dbReference type="KEGG" id="mtc:MT2703"/>
<dbReference type="PATRIC" id="fig|83331.31.peg.2915"/>
<dbReference type="HOGENOM" id="CLU_175503_0_0_11"/>
<dbReference type="Proteomes" id="UP000001020">
    <property type="component" value="Chromosome"/>
</dbReference>
<evidence type="ECO:0000269" key="1">
    <source>
    </source>
</evidence>
<organism>
    <name type="scientific">Mycobacterium tuberculosis (strain CDC 1551 / Oshkosh)</name>
    <dbReference type="NCBI Taxonomy" id="83331"/>
    <lineage>
        <taxon>Bacteria</taxon>
        <taxon>Bacillati</taxon>
        <taxon>Actinomycetota</taxon>
        <taxon>Actinomycetes</taxon>
        <taxon>Mycobacteriales</taxon>
        <taxon>Mycobacteriaceae</taxon>
        <taxon>Mycobacterium</taxon>
        <taxon>Mycobacterium tuberculosis complex</taxon>
    </lineage>
</organism>
<sequence>MSTQRPRHSGIRAVGPYAWAGRCGRIGRWGVHQEAMMNLAIWHPRKVQSATIYQVTDRSHDGRTARVPGDEITSTVSGWLSELGTQSPLADELARAVRIGDWPAAYAIGEHLSVEIAVAV</sequence>
<accession>P9WL64</accession>
<accession>L0TAF6</accession>
<accession>O06184</accession>
<accession>Q7D6V2</accession>